<dbReference type="EMBL" id="CU928180">
    <property type="protein sequence ID" value="CAR30492.1"/>
    <property type="molecule type" value="Genomic_DNA"/>
</dbReference>
<dbReference type="RefSeq" id="XP_002556354.1">
    <property type="nucleotide sequence ID" value="XM_002556308.1"/>
</dbReference>
<dbReference type="FunCoup" id="C5E381">
    <property type="interactions" value="55"/>
</dbReference>
<dbReference type="STRING" id="559295.C5E381"/>
<dbReference type="GeneID" id="8294685"/>
<dbReference type="KEGG" id="lth:KLTH0H11088g"/>
<dbReference type="eggNOG" id="ENOG502S8MU">
    <property type="taxonomic scope" value="Eukaryota"/>
</dbReference>
<dbReference type="HOGENOM" id="CLU_164154_0_0_1"/>
<dbReference type="InParanoid" id="C5E381"/>
<dbReference type="OMA" id="DIWNEQI"/>
<dbReference type="OrthoDB" id="4037694at2759"/>
<dbReference type="Proteomes" id="UP000002036">
    <property type="component" value="Chromosome H"/>
</dbReference>
<dbReference type="GO" id="GO:0061617">
    <property type="term" value="C:MICOS complex"/>
    <property type="evidence" value="ECO:0007669"/>
    <property type="project" value="InterPro"/>
</dbReference>
<dbReference type="GO" id="GO:0044284">
    <property type="term" value="C:mitochondrial crista junction"/>
    <property type="evidence" value="ECO:0007669"/>
    <property type="project" value="InterPro"/>
</dbReference>
<dbReference type="GO" id="GO:0042407">
    <property type="term" value="P:cristae formation"/>
    <property type="evidence" value="ECO:0007669"/>
    <property type="project" value="InterPro"/>
</dbReference>
<dbReference type="InterPro" id="IPR031463">
    <property type="entry name" value="Mic12"/>
</dbReference>
<dbReference type="Pfam" id="PF17050">
    <property type="entry name" value="AIM5"/>
    <property type="match status" value="1"/>
</dbReference>
<organism>
    <name type="scientific">Lachancea thermotolerans (strain ATCC 56472 / CBS 6340 / NRRL Y-8284)</name>
    <name type="common">Yeast</name>
    <name type="synonym">Kluyveromyces thermotolerans</name>
    <dbReference type="NCBI Taxonomy" id="559295"/>
    <lineage>
        <taxon>Eukaryota</taxon>
        <taxon>Fungi</taxon>
        <taxon>Dikarya</taxon>
        <taxon>Ascomycota</taxon>
        <taxon>Saccharomycotina</taxon>
        <taxon>Saccharomycetes</taxon>
        <taxon>Saccharomycetales</taxon>
        <taxon>Saccharomycetaceae</taxon>
        <taxon>Lachancea</taxon>
    </lineage>
</organism>
<feature type="chain" id="PRO_0000399891" description="MICOS complex subunit MIC12">
    <location>
        <begin position="1"/>
        <end position="102"/>
    </location>
</feature>
<feature type="transmembrane region" description="Helical" evidence="2">
    <location>
        <begin position="4"/>
        <end position="26"/>
    </location>
</feature>
<proteinExistence type="inferred from homology"/>
<comment type="function">
    <text evidence="1">Component of the MICOS complex, a large protein complex of the mitochondrial inner membrane that plays crucial roles in the maintenance of crista junctions, inner membrane architecture, and formation of contact sites to the outer membrane.</text>
</comment>
<comment type="subunit">
    <text evidence="1">Component of the mitochondrial contact site and cristae organizing system (MICOS) complex.</text>
</comment>
<comment type="subcellular location">
    <subcellularLocation>
        <location evidence="1">Mitochondrion inner membrane</location>
        <topology evidence="1">Single-pass membrane protein</topology>
    </subcellularLocation>
</comment>
<comment type="similarity">
    <text evidence="3">Belongs to the MICOS complex subunit Mic12 family.</text>
</comment>
<keyword id="KW-0472">Membrane</keyword>
<keyword id="KW-0496">Mitochondrion</keyword>
<keyword id="KW-0999">Mitochondrion inner membrane</keyword>
<keyword id="KW-1185">Reference proteome</keyword>
<keyword id="KW-0812">Transmembrane</keyword>
<keyword id="KW-1133">Transmembrane helix</keyword>
<reference key="1">
    <citation type="journal article" date="2009" name="Genome Res.">
        <title>Comparative genomics of protoploid Saccharomycetaceae.</title>
        <authorList>
            <consortium name="The Genolevures Consortium"/>
            <person name="Souciet J.-L."/>
            <person name="Dujon B."/>
            <person name="Gaillardin C."/>
            <person name="Johnston M."/>
            <person name="Baret P.V."/>
            <person name="Cliften P."/>
            <person name="Sherman D.J."/>
            <person name="Weissenbach J."/>
            <person name="Westhof E."/>
            <person name="Wincker P."/>
            <person name="Jubin C."/>
            <person name="Poulain J."/>
            <person name="Barbe V."/>
            <person name="Segurens B."/>
            <person name="Artiguenave F."/>
            <person name="Anthouard V."/>
            <person name="Vacherie B."/>
            <person name="Val M.-E."/>
            <person name="Fulton R.S."/>
            <person name="Minx P."/>
            <person name="Wilson R."/>
            <person name="Durrens P."/>
            <person name="Jean G."/>
            <person name="Marck C."/>
            <person name="Martin T."/>
            <person name="Nikolski M."/>
            <person name="Rolland T."/>
            <person name="Seret M.-L."/>
            <person name="Casaregola S."/>
            <person name="Despons L."/>
            <person name="Fairhead C."/>
            <person name="Fischer G."/>
            <person name="Lafontaine I."/>
            <person name="Leh V."/>
            <person name="Lemaire M."/>
            <person name="de Montigny J."/>
            <person name="Neuveglise C."/>
            <person name="Thierry A."/>
            <person name="Blanc-Lenfle I."/>
            <person name="Bleykasten C."/>
            <person name="Diffels J."/>
            <person name="Fritsch E."/>
            <person name="Frangeul L."/>
            <person name="Goeffon A."/>
            <person name="Jauniaux N."/>
            <person name="Kachouri-Lafond R."/>
            <person name="Payen C."/>
            <person name="Potier S."/>
            <person name="Pribylova L."/>
            <person name="Ozanne C."/>
            <person name="Richard G.-F."/>
            <person name="Sacerdot C."/>
            <person name="Straub M.-L."/>
            <person name="Talla E."/>
        </authorList>
    </citation>
    <scope>NUCLEOTIDE SEQUENCE [LARGE SCALE GENOMIC DNA]</scope>
    <source>
        <strain>ATCC 56472 / CBS 6340 / NRRL Y-8284</strain>
    </source>
</reference>
<protein>
    <recommendedName>
        <fullName>MICOS complex subunit MIC12</fullName>
    </recommendedName>
    <alternativeName>
        <fullName>Altered inheritance of mitochondria protein 5, mitochondrial</fullName>
    </alternativeName>
    <alternativeName>
        <fullName>Found in mitochondrial proteome protein 51</fullName>
    </alternativeName>
</protein>
<evidence type="ECO:0000250" key="1"/>
<evidence type="ECO:0000255" key="2"/>
<evidence type="ECO:0000305" key="3"/>
<name>MIC12_LACTC</name>
<accession>C5E381</accession>
<sequence length="102" mass="11579">MSKVLKLTSVTLAASSLAAAGYFYAFDRDSYHYKNASWKRIGDHVQGILDRKEDIAVQRTSSEARDVTVRPIKETMKDLWNEQVRNTAQWVYSFGSNTSTKA</sequence>
<gene>
    <name type="primary">AIM5</name>
    <name type="synonym">FMP51</name>
    <name type="ordered locus">KLTH0H11088g</name>
</gene>